<gene>
    <name evidence="3" type="primary">trxB</name>
    <name type="synonym">trxB2</name>
    <name type="ordered locus">MT4032</name>
</gene>
<protein>
    <recommendedName>
        <fullName>Thioredoxin reductase</fullName>
        <shortName>TR</shortName>
        <shortName>TRXR</shortName>
        <ecNumber evidence="2">1.8.1.9</ecNumber>
    </recommendedName>
</protein>
<proteinExistence type="inferred from homology"/>
<evidence type="ECO:0000250" key="1"/>
<evidence type="ECO:0000250" key="2">
    <source>
        <dbReference type="UniProtKB" id="P9WHH1"/>
    </source>
</evidence>
<evidence type="ECO:0000303" key="3">
    <source>
    </source>
</evidence>
<evidence type="ECO:0000305" key="4"/>
<feature type="chain" id="PRO_0000428188" description="Thioredoxin reductase">
    <location>
        <begin position="1"/>
        <end position="335"/>
    </location>
</feature>
<feature type="binding site" evidence="2">
    <location>
        <begin position="22"/>
        <end position="25"/>
    </location>
    <ligand>
        <name>FAD</name>
        <dbReference type="ChEBI" id="CHEBI:57692"/>
    </ligand>
</feature>
<feature type="binding site" evidence="2">
    <location>
        <begin position="44"/>
        <end position="51"/>
    </location>
    <ligand>
        <name>FAD</name>
        <dbReference type="ChEBI" id="CHEBI:57692"/>
    </ligand>
</feature>
<feature type="binding site" evidence="2">
    <location>
        <position position="60"/>
    </location>
    <ligand>
        <name>FAD</name>
        <dbReference type="ChEBI" id="CHEBI:57692"/>
    </ligand>
</feature>
<feature type="binding site" evidence="2">
    <location>
        <position position="93"/>
    </location>
    <ligand>
        <name>FAD</name>
        <dbReference type="ChEBI" id="CHEBI:57692"/>
    </ligand>
</feature>
<feature type="binding site" evidence="2">
    <location>
        <position position="166"/>
    </location>
    <ligand>
        <name>NADP(+)</name>
        <dbReference type="ChEBI" id="CHEBI:58349"/>
    </ligand>
</feature>
<feature type="binding site" evidence="2">
    <location>
        <position position="185"/>
    </location>
    <ligand>
        <name>NADP(+)</name>
        <dbReference type="ChEBI" id="CHEBI:58349"/>
    </ligand>
</feature>
<feature type="binding site" evidence="2">
    <location>
        <position position="191"/>
    </location>
    <ligand>
        <name>NADP(+)</name>
        <dbReference type="ChEBI" id="CHEBI:58349"/>
    </ligand>
</feature>
<feature type="binding site" evidence="2">
    <location>
        <position position="248"/>
    </location>
    <ligand>
        <name>NADP(+)</name>
        <dbReference type="ChEBI" id="CHEBI:58349"/>
    </ligand>
</feature>
<feature type="binding site" evidence="2">
    <location>
        <position position="268"/>
    </location>
    <ligand>
        <name>NADP(+)</name>
        <dbReference type="ChEBI" id="CHEBI:58349"/>
    </ligand>
</feature>
<feature type="binding site" evidence="2">
    <location>
        <position position="288"/>
    </location>
    <ligand>
        <name>FAD</name>
        <dbReference type="ChEBI" id="CHEBI:57692"/>
    </ligand>
</feature>
<feature type="binding site" evidence="2">
    <location>
        <begin position="295"/>
        <end position="298"/>
    </location>
    <ligand>
        <name>FAD</name>
        <dbReference type="ChEBI" id="CHEBI:57692"/>
    </ligand>
</feature>
<feature type="binding site" evidence="2">
    <location>
        <position position="295"/>
    </location>
    <ligand>
        <name>NADP(+)</name>
        <dbReference type="ChEBI" id="CHEBI:58349"/>
    </ligand>
</feature>
<feature type="disulfide bond" description="Redox-active" evidence="2">
    <location>
        <begin position="145"/>
        <end position="148"/>
    </location>
</feature>
<sequence>MTAPPVHDRAHHPVRDVIVIGSGPAGYTAALYAARAQLAPLVFEGTSFGGALMTTTDVENYPGFRNGITGPELMDEMREQALRFGADLRMEDVESVSLHGPLKSVVTADGQTHRARAVILAMGAAARYLQVPGEQELLGRGVSSCATCDGFFFRDQDIAVIGGGDSAMEEATFLTRFARSVTLVHRRDEFRASKIMLDRARNNDKIRFLTNHTVVAVDGDTTVTGLRVRDTNTGAETTLPVTGVFVAIGHEPRSGLVREAIDVDPDGYVLVQGRTTSTSLPGVFAAGDLVDRTYRQAVTAAGSGCAAAIDAERWLAEHAATGEADSTDALIGAQR</sequence>
<organism>
    <name type="scientific">Mycobacterium tuberculosis (strain CDC 1551 / Oshkosh)</name>
    <dbReference type="NCBI Taxonomy" id="83331"/>
    <lineage>
        <taxon>Bacteria</taxon>
        <taxon>Bacillati</taxon>
        <taxon>Actinomycetota</taxon>
        <taxon>Actinomycetes</taxon>
        <taxon>Mycobacteriales</taxon>
        <taxon>Mycobacteriaceae</taxon>
        <taxon>Mycobacterium</taxon>
        <taxon>Mycobacterium tuberculosis complex</taxon>
    </lineage>
</organism>
<reference key="1">
    <citation type="journal article" date="2002" name="J. Bacteriol.">
        <title>Whole-genome comparison of Mycobacterium tuberculosis clinical and laboratory strains.</title>
        <authorList>
            <person name="Fleischmann R.D."/>
            <person name="Alland D."/>
            <person name="Eisen J.A."/>
            <person name="Carpenter L."/>
            <person name="White O."/>
            <person name="Peterson J.D."/>
            <person name="DeBoy R.T."/>
            <person name="Dodson R.J."/>
            <person name="Gwinn M.L."/>
            <person name="Haft D.H."/>
            <person name="Hickey E.K."/>
            <person name="Kolonay J.F."/>
            <person name="Nelson W.C."/>
            <person name="Umayam L.A."/>
            <person name="Ermolaeva M.D."/>
            <person name="Salzberg S.L."/>
            <person name="Delcher A."/>
            <person name="Utterback T.R."/>
            <person name="Weidman J.F."/>
            <person name="Khouri H.M."/>
            <person name="Gill J."/>
            <person name="Mikula A."/>
            <person name="Bishai W."/>
            <person name="Jacobs W.R. Jr."/>
            <person name="Venter J.C."/>
            <person name="Fraser C.M."/>
        </authorList>
    </citation>
    <scope>NUCLEOTIDE SEQUENCE [LARGE SCALE GENOMIC DNA]</scope>
    <source>
        <strain>CDC 1551 / Oshkosh</strain>
    </source>
</reference>
<comment type="catalytic activity">
    <reaction evidence="2">
        <text>[thioredoxin]-dithiol + NADP(+) = [thioredoxin]-disulfide + NADPH + H(+)</text>
        <dbReference type="Rhea" id="RHEA:20345"/>
        <dbReference type="Rhea" id="RHEA-COMP:10698"/>
        <dbReference type="Rhea" id="RHEA-COMP:10700"/>
        <dbReference type="ChEBI" id="CHEBI:15378"/>
        <dbReference type="ChEBI" id="CHEBI:29950"/>
        <dbReference type="ChEBI" id="CHEBI:50058"/>
        <dbReference type="ChEBI" id="CHEBI:57783"/>
        <dbReference type="ChEBI" id="CHEBI:58349"/>
        <dbReference type="EC" id="1.8.1.9"/>
    </reaction>
</comment>
<comment type="cofactor">
    <cofactor evidence="2">
        <name>FAD</name>
        <dbReference type="ChEBI" id="CHEBI:57692"/>
    </cofactor>
    <text evidence="2">Binds 1 FAD per subunit.</text>
</comment>
<comment type="subunit">
    <text evidence="2">Homodimer.</text>
</comment>
<comment type="subcellular location">
    <subcellularLocation>
        <location evidence="1">Cytoplasm</location>
    </subcellularLocation>
</comment>
<comment type="miscellaneous">
    <text evidence="2">The active site is a redox-active disulfide bond.</text>
</comment>
<comment type="similarity">
    <text evidence="4">Belongs to the class-II pyridine nucleotide-disulfide oxidoreductase family.</text>
</comment>
<dbReference type="EC" id="1.8.1.9" evidence="2"/>
<dbReference type="EMBL" id="AE000516">
    <property type="protein sequence ID" value="AAK48397.1"/>
    <property type="molecule type" value="Genomic_DNA"/>
</dbReference>
<dbReference type="PIR" id="A70851">
    <property type="entry name" value="A70851"/>
</dbReference>
<dbReference type="RefSeq" id="WP_003900782.1">
    <property type="nucleotide sequence ID" value="NZ_KK341228.1"/>
</dbReference>
<dbReference type="SMR" id="P9WHH0"/>
<dbReference type="GeneID" id="45427913"/>
<dbReference type="KEGG" id="mtc:MT4032"/>
<dbReference type="PATRIC" id="fig|83331.31.peg.4338"/>
<dbReference type="HOGENOM" id="CLU_031864_5_1_11"/>
<dbReference type="Proteomes" id="UP000001020">
    <property type="component" value="Chromosome"/>
</dbReference>
<dbReference type="GO" id="GO:0005737">
    <property type="term" value="C:cytoplasm"/>
    <property type="evidence" value="ECO:0007669"/>
    <property type="project" value="UniProtKB-SubCell"/>
</dbReference>
<dbReference type="GO" id="GO:0004791">
    <property type="term" value="F:thioredoxin-disulfide reductase (NADPH) activity"/>
    <property type="evidence" value="ECO:0007669"/>
    <property type="project" value="UniProtKB-EC"/>
</dbReference>
<dbReference type="GO" id="GO:0019430">
    <property type="term" value="P:removal of superoxide radicals"/>
    <property type="evidence" value="ECO:0007669"/>
    <property type="project" value="InterPro"/>
</dbReference>
<dbReference type="Gene3D" id="3.50.50.60">
    <property type="entry name" value="FAD/NAD(P)-binding domain"/>
    <property type="match status" value="2"/>
</dbReference>
<dbReference type="InterPro" id="IPR036188">
    <property type="entry name" value="FAD/NAD-bd_sf"/>
</dbReference>
<dbReference type="InterPro" id="IPR023753">
    <property type="entry name" value="FAD/NAD-binding_dom"/>
</dbReference>
<dbReference type="InterPro" id="IPR050097">
    <property type="entry name" value="Ferredoxin-NADP_redctase_2"/>
</dbReference>
<dbReference type="InterPro" id="IPR008255">
    <property type="entry name" value="Pyr_nucl-diS_OxRdtase_2_AS"/>
</dbReference>
<dbReference type="InterPro" id="IPR005982">
    <property type="entry name" value="Thioredox_Rdtase"/>
</dbReference>
<dbReference type="NCBIfam" id="TIGR01292">
    <property type="entry name" value="TRX_reduct"/>
    <property type="match status" value="1"/>
</dbReference>
<dbReference type="PANTHER" id="PTHR48105">
    <property type="entry name" value="THIOREDOXIN REDUCTASE 1-RELATED-RELATED"/>
    <property type="match status" value="1"/>
</dbReference>
<dbReference type="Pfam" id="PF07992">
    <property type="entry name" value="Pyr_redox_2"/>
    <property type="match status" value="1"/>
</dbReference>
<dbReference type="PRINTS" id="PR00368">
    <property type="entry name" value="FADPNR"/>
</dbReference>
<dbReference type="PRINTS" id="PR00469">
    <property type="entry name" value="PNDRDTASEII"/>
</dbReference>
<dbReference type="SUPFAM" id="SSF51905">
    <property type="entry name" value="FAD/NAD(P)-binding domain"/>
    <property type="match status" value="1"/>
</dbReference>
<dbReference type="PROSITE" id="PS00573">
    <property type="entry name" value="PYRIDINE_REDOX_2"/>
    <property type="match status" value="1"/>
</dbReference>
<accession>P9WHH0</accession>
<accession>L0TFM3</accession>
<accession>O53592</accession>
<accession>P52214</accession>
<keyword id="KW-0963">Cytoplasm</keyword>
<keyword id="KW-1015">Disulfide bond</keyword>
<keyword id="KW-0274">FAD</keyword>
<keyword id="KW-0285">Flavoprotein</keyword>
<keyword id="KW-0521">NADP</keyword>
<keyword id="KW-0560">Oxidoreductase</keyword>
<keyword id="KW-0676">Redox-active center</keyword>
<keyword id="KW-1185">Reference proteome</keyword>
<name>TRXB_MYCTO</name>